<gene>
    <name evidence="2" type="primary">accD</name>
</gene>
<organism>
    <name type="scientific">Anthoceros angustus</name>
    <name type="common">Hornwort</name>
    <name type="synonym">Anthoceros formosae</name>
    <dbReference type="NCBI Taxonomy" id="48387"/>
    <lineage>
        <taxon>Eukaryota</taxon>
        <taxon>Viridiplantae</taxon>
        <taxon>Streptophyta</taxon>
        <taxon>Embryophyta</taxon>
        <taxon>Anthocerotophyta</taxon>
        <taxon>Anthocerotopsida</taxon>
        <taxon>Anthocerotidae</taxon>
        <taxon>Anthocerotales</taxon>
        <taxon>Anthocerotaceae</taxon>
        <taxon>Anthoceros</taxon>
    </lineage>
</organism>
<keyword id="KW-0067">ATP-binding</keyword>
<keyword id="KW-0150">Chloroplast</keyword>
<keyword id="KW-0275">Fatty acid biosynthesis</keyword>
<keyword id="KW-0276">Fatty acid metabolism</keyword>
<keyword id="KW-0444">Lipid biosynthesis</keyword>
<keyword id="KW-0443">Lipid metabolism</keyword>
<keyword id="KW-0479">Metal-binding</keyword>
<keyword id="KW-0547">Nucleotide-binding</keyword>
<keyword id="KW-0934">Plastid</keyword>
<keyword id="KW-0691">RNA editing</keyword>
<keyword id="KW-0808">Transferase</keyword>
<keyword id="KW-0862">Zinc</keyword>
<keyword id="KW-0863">Zinc-finger</keyword>
<accession>Q31796</accession>
<protein>
    <recommendedName>
        <fullName evidence="2">Acetyl-coenzyme A carboxylase carboxyl transferase subunit beta, chloroplastic</fullName>
        <shortName evidence="2">ACCase subunit beta</shortName>
        <shortName evidence="2">Acetyl-CoA carboxylase carboxyltransferase subunit beta</shortName>
        <ecNumber evidence="2">2.1.3.15</ecNumber>
    </recommendedName>
</protein>
<comment type="function">
    <text evidence="2">Component of the acetyl coenzyme A carboxylase (ACC) complex. Biotin carboxylase (BC) catalyzes the carboxylation of biotin on its carrier protein (BCCP) and then the CO(2) group is transferred by the transcarboxylase to acetyl-CoA to form malonyl-CoA.</text>
</comment>
<comment type="catalytic activity">
    <reaction evidence="2">
        <text>N(6)-carboxybiotinyl-L-lysyl-[protein] + acetyl-CoA = N(6)-biotinyl-L-lysyl-[protein] + malonyl-CoA</text>
        <dbReference type="Rhea" id="RHEA:54728"/>
        <dbReference type="Rhea" id="RHEA-COMP:10505"/>
        <dbReference type="Rhea" id="RHEA-COMP:10506"/>
        <dbReference type="ChEBI" id="CHEBI:57288"/>
        <dbReference type="ChEBI" id="CHEBI:57384"/>
        <dbReference type="ChEBI" id="CHEBI:83144"/>
        <dbReference type="ChEBI" id="CHEBI:83145"/>
        <dbReference type="EC" id="2.1.3.15"/>
    </reaction>
</comment>
<comment type="cofactor">
    <cofactor evidence="2">
        <name>Zn(2+)</name>
        <dbReference type="ChEBI" id="CHEBI:29105"/>
    </cofactor>
    <text evidence="2">Binds 1 zinc ion per subunit.</text>
</comment>
<comment type="pathway">
    <text evidence="2">Lipid metabolism; malonyl-CoA biosynthesis; malonyl-CoA from acetyl-CoA: step 1/1.</text>
</comment>
<comment type="subunit">
    <text evidence="1">Acetyl-CoA carboxylase is a heterohexamer composed of biotin carboxyl carrier protein, biotin carboxylase and 2 subunits each of ACCase subunit alpha and ACCase plastid-coded subunit beta (accD).</text>
</comment>
<comment type="subcellular location">
    <subcellularLocation>
        <location evidence="2">Plastid</location>
        <location evidence="2">Chloroplast stroma</location>
    </subcellularLocation>
</comment>
<comment type="RNA editing">
    <location>
        <position position="50" evidence="4 5"/>
    </location>
    <location>
        <position position="59" evidence="4 5"/>
    </location>
    <location>
        <position position="78" evidence="4 5"/>
    </location>
    <location>
        <position position="87" evidence="4 5"/>
    </location>
    <location>
        <position position="104" evidence="4 5"/>
    </location>
    <location>
        <position position="132" evidence="4 5"/>
    </location>
    <location>
        <position position="139" evidence="4 5"/>
    </location>
    <location>
        <position position="146" evidence="4 5"/>
    </location>
    <location>
        <position position="149" evidence="4 5"/>
    </location>
    <location>
        <position position="160" evidence="4 5"/>
    </location>
    <location>
        <position position="170" evidence="4 5"/>
    </location>
    <location>
        <position position="177" evidence="4 5"/>
    </location>
    <location>
        <position position="185" evidence="4 5"/>
    </location>
    <location>
        <position position="198" evidence="4 5"/>
    </location>
    <location>
        <position position="208" evidence="4 5"/>
    </location>
    <location>
        <position position="223" evidence="4 5"/>
    </location>
    <location>
        <position position="226" evidence="4 5"/>
    </location>
    <location>
        <position position="228" evidence="4 5"/>
    </location>
    <location>
        <position position="243" evidence="4 5"/>
    </location>
    <location>
        <position position="246" evidence="4 5"/>
    </location>
    <location>
        <position position="252" evidence="4 5"/>
    </location>
    <location>
        <position position="260" evidence="4 5"/>
    </location>
    <location>
        <position position="264" evidence="4 5"/>
    </location>
    <location>
        <position position="277" evidence="4 5"/>
    </location>
    <location>
        <position position="285" evidence="4 5"/>
    </location>
    <location>
        <position position="295" evidence="4 5"/>
    </location>
    <text>The nonsense codons at positions 50, 78, 104, 260 and 264 are modified to sense codons.</text>
</comment>
<comment type="similarity">
    <text evidence="2">Belongs to the AccD/PCCB family.</text>
</comment>
<proteinExistence type="evidence at transcript level"/>
<name>ACCD_ANTAG</name>
<dbReference type="EC" id="2.1.3.15" evidence="2"/>
<dbReference type="EMBL" id="AB086179">
    <property type="protein sequence ID" value="BAC55358.1"/>
    <property type="molecule type" value="Genomic_DNA"/>
</dbReference>
<dbReference type="EMBL" id="AB087450">
    <property type="protein sequence ID" value="BAC55454.1"/>
    <property type="molecule type" value="mRNA"/>
</dbReference>
<dbReference type="EMBL" id="D43695">
    <property type="protein sequence ID" value="BAA07797.1"/>
    <property type="status" value="ALT_SEQ"/>
    <property type="molecule type" value="Genomic_DNA"/>
</dbReference>
<dbReference type="PIR" id="S71147">
    <property type="entry name" value="S71147"/>
</dbReference>
<dbReference type="RefSeq" id="NP_777422.1">
    <property type="nucleotide sequence ID" value="NC_004543.1"/>
</dbReference>
<dbReference type="SMR" id="Q31796"/>
<dbReference type="GeneID" id="2553479"/>
<dbReference type="UniPathway" id="UPA00655">
    <property type="reaction ID" value="UER00711"/>
</dbReference>
<dbReference type="GO" id="GO:0009317">
    <property type="term" value="C:acetyl-CoA carboxylase complex"/>
    <property type="evidence" value="ECO:0007669"/>
    <property type="project" value="InterPro"/>
</dbReference>
<dbReference type="GO" id="GO:0009570">
    <property type="term" value="C:chloroplast stroma"/>
    <property type="evidence" value="ECO:0007669"/>
    <property type="project" value="UniProtKB-SubCell"/>
</dbReference>
<dbReference type="GO" id="GO:0003989">
    <property type="term" value="F:acetyl-CoA carboxylase activity"/>
    <property type="evidence" value="ECO:0007669"/>
    <property type="project" value="InterPro"/>
</dbReference>
<dbReference type="GO" id="GO:0005524">
    <property type="term" value="F:ATP binding"/>
    <property type="evidence" value="ECO:0007669"/>
    <property type="project" value="UniProtKB-KW"/>
</dbReference>
<dbReference type="GO" id="GO:0016743">
    <property type="term" value="F:carboxyl- or carbamoyltransferase activity"/>
    <property type="evidence" value="ECO:0007669"/>
    <property type="project" value="UniProtKB-UniRule"/>
</dbReference>
<dbReference type="GO" id="GO:0008270">
    <property type="term" value="F:zinc ion binding"/>
    <property type="evidence" value="ECO:0007669"/>
    <property type="project" value="UniProtKB-UniRule"/>
</dbReference>
<dbReference type="GO" id="GO:0006633">
    <property type="term" value="P:fatty acid biosynthetic process"/>
    <property type="evidence" value="ECO:0007669"/>
    <property type="project" value="UniProtKB-KW"/>
</dbReference>
<dbReference type="GO" id="GO:2001295">
    <property type="term" value="P:malonyl-CoA biosynthetic process"/>
    <property type="evidence" value="ECO:0007669"/>
    <property type="project" value="UniProtKB-UniRule"/>
</dbReference>
<dbReference type="Gene3D" id="3.90.226.10">
    <property type="entry name" value="2-enoyl-CoA Hydratase, Chain A, domain 1"/>
    <property type="match status" value="1"/>
</dbReference>
<dbReference type="HAMAP" id="MF_01395">
    <property type="entry name" value="AcetylCoA_CT_beta"/>
    <property type="match status" value="1"/>
</dbReference>
<dbReference type="InterPro" id="IPR034733">
    <property type="entry name" value="AcCoA_carboxyl_beta"/>
</dbReference>
<dbReference type="InterPro" id="IPR000438">
    <property type="entry name" value="Acetyl_CoA_COase_Trfase_b_su"/>
</dbReference>
<dbReference type="InterPro" id="IPR029045">
    <property type="entry name" value="ClpP/crotonase-like_dom_sf"/>
</dbReference>
<dbReference type="InterPro" id="IPR011762">
    <property type="entry name" value="COA_CT_N"/>
</dbReference>
<dbReference type="NCBIfam" id="TIGR00515">
    <property type="entry name" value="accD"/>
    <property type="match status" value="1"/>
</dbReference>
<dbReference type="PANTHER" id="PTHR42995">
    <property type="entry name" value="ACETYL-COENZYME A CARBOXYLASE CARBOXYL TRANSFERASE SUBUNIT BETA, CHLOROPLASTIC"/>
    <property type="match status" value="1"/>
</dbReference>
<dbReference type="PANTHER" id="PTHR42995:SF5">
    <property type="entry name" value="ACETYL-COENZYME A CARBOXYLASE CARBOXYL TRANSFERASE SUBUNIT BETA, CHLOROPLASTIC"/>
    <property type="match status" value="1"/>
</dbReference>
<dbReference type="Pfam" id="PF01039">
    <property type="entry name" value="Carboxyl_trans"/>
    <property type="match status" value="1"/>
</dbReference>
<dbReference type="PRINTS" id="PR01070">
    <property type="entry name" value="ACCCTRFRASEB"/>
</dbReference>
<dbReference type="SUPFAM" id="SSF52096">
    <property type="entry name" value="ClpP/crotonase"/>
    <property type="match status" value="1"/>
</dbReference>
<dbReference type="PROSITE" id="PS50980">
    <property type="entry name" value="COA_CT_NTER"/>
    <property type="match status" value="1"/>
</dbReference>
<feature type="chain" id="PRO_0000199779" description="Acetyl-coenzyme A carboxylase carboxyl transferase subunit beta, chloroplastic">
    <location>
        <begin position="1"/>
        <end position="313"/>
    </location>
</feature>
<feature type="domain" description="CoA carboxyltransferase N-terminal" evidence="3">
    <location>
        <begin position="47"/>
        <end position="313"/>
    </location>
</feature>
<feature type="zinc finger region" description="C4-type" evidence="2">
    <location>
        <begin position="51"/>
        <end position="73"/>
    </location>
</feature>
<feature type="binding site" evidence="2">
    <location>
        <position position="51"/>
    </location>
    <ligand>
        <name>Zn(2+)</name>
        <dbReference type="ChEBI" id="CHEBI:29105"/>
    </ligand>
</feature>
<feature type="binding site" evidence="2">
    <location>
        <position position="54"/>
    </location>
    <ligand>
        <name>Zn(2+)</name>
        <dbReference type="ChEBI" id="CHEBI:29105"/>
    </ligand>
</feature>
<feature type="binding site" evidence="2">
    <location>
        <position position="70"/>
    </location>
    <ligand>
        <name>Zn(2+)</name>
        <dbReference type="ChEBI" id="CHEBI:29105"/>
    </ligand>
</feature>
<feature type="binding site" evidence="2">
    <location>
        <position position="73"/>
    </location>
    <ligand>
        <name>Zn(2+)</name>
        <dbReference type="ChEBI" id="CHEBI:29105"/>
    </ligand>
</feature>
<geneLocation type="chloroplast"/>
<reference key="1">
    <citation type="journal article" date="2003" name="Nucleic Acids Res.">
        <title>The complete nucleotide sequence of the hornwort (Anthoceros formosae) chloroplast genome: insight into the earliest land plants.</title>
        <authorList>
            <person name="Kugita M."/>
            <person name="Kaneko A."/>
            <person name="Yamamoto Y."/>
            <person name="Takeya Y."/>
            <person name="Matsumoto T."/>
            <person name="Yoshinaga K."/>
        </authorList>
    </citation>
    <scope>NUCLEOTIDE SEQUENCE [LARGE SCALE GENOMIC DNA]</scope>
    <scope>RNA EDITING</scope>
</reference>
<reference key="2">
    <citation type="journal article" date="2003" name="Nucleic Acids Res.">
        <title>RNA editing in hornwort chloroplasts makes more than half the genes functional.</title>
        <authorList>
            <person name="Kugita M."/>
            <person name="Yamamoto Y."/>
            <person name="Fujikawa T."/>
            <person name="Matsumoto T."/>
            <person name="Yoshinaga K."/>
        </authorList>
    </citation>
    <scope>NUCLEOTIDE SEQUENCE [MRNA]</scope>
    <scope>RNA EDITING</scope>
    <source>
        <tissue>Thallus</tissue>
    </source>
</reference>
<reference key="3">
    <citation type="journal article" date="1996" name="Nucleic Acids Res.">
        <title>Extensive RNA editing of U to C in addition to C to U substitution in the rbcL transcripts of hornwort chloroplasts and the origin of RNA editing in green plants.</title>
        <authorList>
            <person name="Yoshinaga K."/>
            <person name="Iinuma H."/>
            <person name="Masuzawa T."/>
            <person name="Ueda K."/>
        </authorList>
    </citation>
    <scope>NUCLEOTIDE SEQUENCE [GENOMIC DNA] OF 1-91</scope>
    <source>
        <tissue>Thallus</tissue>
    </source>
</reference>
<evidence type="ECO:0000250" key="1"/>
<evidence type="ECO:0000255" key="2">
    <source>
        <dbReference type="HAMAP-Rule" id="MF_01395"/>
    </source>
</evidence>
<evidence type="ECO:0000255" key="3">
    <source>
        <dbReference type="PROSITE-ProRule" id="PRU01136"/>
    </source>
</evidence>
<evidence type="ECO:0000269" key="4">
    <source>
    </source>
</evidence>
<evidence type="ECO:0000269" key="5">
    <source>
    </source>
</evidence>
<sequence length="313" mass="35272">MSLMNWFEDRRKFSGLIGAFIEKATKGYILSERRKDRHIKIDTTKGLWTRCDNCENMLYIRFLRQNKRICEECGYHLQMSSTERIESLIDRGTWHPMDEDMVARDALKFSDEDSYKNRVLFYQKRTGLTDAIQTGIGKLNGIPIALGVMDFQFMGGSMGSVVGEKITRLIEYGTRESMPVIIVCSSGGARMQEGTLSLMQMAKISAVLQIHQAQKKLLYIAILTYPTTGGVTASFGMLGDVIIAEPKAYIAFAGKRVIEQTLRQKIPDGSQVAESLFDHGLLDLIVPRNLLRGVLSEIFELYSSAPCRRSNNS</sequence>